<protein>
    <recommendedName>
        <fullName>Uncharacterized protein ycf73</fullName>
    </recommendedName>
</protein>
<gene>
    <name type="primary">ycf73-A</name>
    <name type="ordered locus">PS018</name>
</gene>
<gene>
    <name type="primary">ycf73-B</name>
    <name type="ordered locus">PS068</name>
</gene>
<organism>
    <name type="scientific">Saccharum hybrid</name>
    <name type="common">Sugarcane</name>
    <dbReference type="NCBI Taxonomy" id="15819"/>
    <lineage>
        <taxon>Eukaryota</taxon>
        <taxon>Viridiplantae</taxon>
        <taxon>Streptophyta</taxon>
        <taxon>Embryophyta</taxon>
        <taxon>Tracheophyta</taxon>
        <taxon>Spermatophyta</taxon>
        <taxon>Magnoliopsida</taxon>
        <taxon>Liliopsida</taxon>
        <taxon>Poales</taxon>
        <taxon>Poaceae</taxon>
        <taxon>PACMAD clade</taxon>
        <taxon>Panicoideae</taxon>
        <taxon>Andropogonodae</taxon>
        <taxon>Andropogoneae</taxon>
        <taxon>Saccharinae</taxon>
        <taxon>Saccharum</taxon>
    </lineage>
</organism>
<feature type="chain" id="PRO_0000277360" description="Uncharacterized protein ycf73">
    <location>
        <begin position="1"/>
        <end position="173"/>
    </location>
</feature>
<comment type="subcellular location">
    <subcellularLocation>
        <location>Plastid</location>
        <location>Chloroplast</location>
    </subcellularLocation>
</comment>
<comment type="similarity">
    <text evidence="1">Belongs to the ycf73 family.</text>
</comment>
<accession>Q6L3F1</accession>
<reference key="1">
    <citation type="journal article" date="2004" name="Curr. Genet.">
        <title>Structural features and transcript-editing analysis of sugarcane (Saccharum officinarum L.) chloroplast genome.</title>
        <authorList>
            <person name="Calsa T. Jr."/>
            <person name="Carraro D.M."/>
            <person name="Benatti M.R."/>
            <person name="Barbosa A.C."/>
            <person name="Kitajima J.P."/>
            <person name="Carrer H."/>
        </authorList>
    </citation>
    <scope>NUCLEOTIDE SEQUENCE [LARGE SCALE GENOMIC DNA]</scope>
    <source>
        <strain>cv. SP-80-3280</strain>
    </source>
</reference>
<keyword id="KW-0150">Chloroplast</keyword>
<keyword id="KW-0934">Plastid</keyword>
<name>YCF73_SACHY</name>
<dbReference type="EMBL" id="AE009947">
    <property type="protein sequence ID" value="AAT44667.1"/>
    <property type="molecule type" value="Genomic_DNA"/>
</dbReference>
<dbReference type="EMBL" id="AE009947">
    <property type="protein sequence ID" value="AAT44642.1"/>
    <property type="molecule type" value="Genomic_DNA"/>
</dbReference>
<dbReference type="SMR" id="Q6L3F1"/>
<dbReference type="GO" id="GO:0009507">
    <property type="term" value="C:chloroplast"/>
    <property type="evidence" value="ECO:0007669"/>
    <property type="project" value="UniProtKB-SubCell"/>
</dbReference>
<proteinExistence type="inferred from homology"/>
<evidence type="ECO:0000305" key="1"/>
<geneLocation type="chloroplast"/>
<sequence length="173" mass="20340">MTKDETLLVFTLVVSSVSIFLFGILLFMVLISATRDFRERTKSKLVKIMIWAGIVVITFAIAVRIYPIFIFLLKERIKPLVEALYDKLPWIWEVSLSRYWDRLIDFLDRYLWACAQRIQTGIRKQKGEFVVTFSCRVKKRLYARAIEVGIHLSLLSNLFWILKTTLAVGYRLL</sequence>